<reference key="1">
    <citation type="journal article" date="1998" name="Nature">
        <title>The complete genome of the hyperthermophilic bacterium Aquifex aeolicus.</title>
        <authorList>
            <person name="Deckert G."/>
            <person name="Warren P.V."/>
            <person name="Gaasterland T."/>
            <person name="Young W.G."/>
            <person name="Lenox A.L."/>
            <person name="Graham D.E."/>
            <person name="Overbeek R."/>
            <person name="Snead M.A."/>
            <person name="Keller M."/>
            <person name="Aujay M."/>
            <person name="Huber R."/>
            <person name="Feldman R.A."/>
            <person name="Short J.M."/>
            <person name="Olsen G.J."/>
            <person name="Swanson R.V."/>
        </authorList>
    </citation>
    <scope>NUCLEOTIDE SEQUENCE [LARGE SCALE GENOMIC DNA]</scope>
    <source>
        <strain>VF5</strain>
    </source>
</reference>
<reference key="2">
    <citation type="journal article" date="2007" name="J. Biochem.">
        <title>Characterization and crystallization of an IscU-type scaffold protein with bound [2Fe-2S] cluster from the hyperthermophile, aquifex aeolicus.</title>
        <authorList>
            <person name="Shimomura Y."/>
            <person name="Kamikubo H."/>
            <person name="Nishi Y."/>
            <person name="Masako T."/>
            <person name="Kataoka M."/>
            <person name="Kobayashi Y."/>
            <person name="Fukuyama K."/>
            <person name="Takahashi Y."/>
        </authorList>
    </citation>
    <scope>SUBUNIT</scope>
    <scope>BINDING OF 2FE-2S CLUSTER</scope>
    <scope>MUTAGENESIS OF ASP-38; 140-GLU--THR-157 AND 130-GLU--THR-157</scope>
    <source>
        <strain>VF5</strain>
    </source>
</reference>
<reference key="3">
    <citation type="journal article" date="2008" name="J. Mol. Biol.">
        <title>The asymmetric trimeric architecture of [2Fe-2S] IscU: implications for its scaffolding during iron-sulfur cluster biosynthesis.</title>
        <authorList>
            <person name="Shimomura Y."/>
            <person name="Wada K."/>
            <person name="Fukuyama K."/>
            <person name="Takahashi Y."/>
        </authorList>
    </citation>
    <scope>X-RAY CRYSTALLOGRAPHY (2.3 ANGSTROMS) IN COMPLEX WITH IRON-SULFUR (2FE-2S)</scope>
    <scope>SUBUNIT</scope>
    <scope>MUTAGENESIS OF ASP-38</scope>
    <source>
        <strain>VF5</strain>
    </source>
</reference>
<evidence type="ECO:0000250" key="1">
    <source>
        <dbReference type="UniProtKB" id="P0DMG2"/>
    </source>
</evidence>
<evidence type="ECO:0000256" key="2">
    <source>
        <dbReference type="SAM" id="MobiDB-lite"/>
    </source>
</evidence>
<evidence type="ECO:0000269" key="3">
    <source>
    </source>
</evidence>
<evidence type="ECO:0000269" key="4">
    <source>
    </source>
</evidence>
<evidence type="ECO:0000305" key="5"/>
<evidence type="ECO:0007829" key="6">
    <source>
        <dbReference type="PDB" id="2Z7E"/>
    </source>
</evidence>
<sequence>MSFEYNEKVLDHFLNPRNVGVLEDANGVGQCGNPACGDAMLFTIKVNPENDVIEDVRFKTFGCGSAIAVSSMLTEMVKGKPIQYALNLTYKDIFEELGGLPPQKIHCTNLGLETLHVAIKDYLMKQGRVEEASKIPDCYEEEEEQEESKEFEFLSGT</sequence>
<gene>
    <name type="primary">iscU</name>
    <name type="synonym">nifU</name>
    <name type="ordered locus">aq_896</name>
</gene>
<proteinExistence type="evidence at protein level"/>
<name>ISCU_AQUAE</name>
<accession>O67045</accession>
<organism>
    <name type="scientific">Aquifex aeolicus (strain VF5)</name>
    <dbReference type="NCBI Taxonomy" id="224324"/>
    <lineage>
        <taxon>Bacteria</taxon>
        <taxon>Pseudomonadati</taxon>
        <taxon>Aquificota</taxon>
        <taxon>Aquificia</taxon>
        <taxon>Aquificales</taxon>
        <taxon>Aquificaceae</taxon>
        <taxon>Aquifex</taxon>
    </lineage>
</organism>
<comment type="function">
    <text evidence="5">A scaffold on which IscS assembles Fe-S clusters. Subsequently gives the nascent cluster to other proteins. It is likely that Fe-S cluster coordination is flexible as the role of this complex is to build and then hand off Fe-S clusters (Probable).</text>
</comment>
<comment type="subunit">
    <text evidence="3 4">Homotrimer upon overexpression in E.coli and in crystal structure. The trimer binds Fe-S clusters, upon exposure to air it loses the clusters and concomitantly dissociates into monomers and dimers.</text>
</comment>
<comment type="similarity">
    <text evidence="5">Belongs to the NifU family.</text>
</comment>
<feature type="chain" id="PRO_0000166179" description="Iron-sulfur cluster assembly scaffold protein IscU">
    <location>
        <begin position="1"/>
        <end position="157"/>
    </location>
</feature>
<feature type="region of interest" description="Disordered" evidence="2">
    <location>
        <begin position="137"/>
        <end position="157"/>
    </location>
</feature>
<feature type="compositionally biased region" description="Acidic residues" evidence="2">
    <location>
        <begin position="138"/>
        <end position="147"/>
    </location>
</feature>
<feature type="compositionally biased region" description="Basic and acidic residues" evidence="2">
    <location>
        <begin position="148"/>
        <end position="157"/>
    </location>
</feature>
<feature type="binding site" evidence="1 4">
    <location>
        <position position="36"/>
    </location>
    <ligand>
        <name>[2Fe-2S] cluster</name>
        <dbReference type="ChEBI" id="CHEBI:190135"/>
        <note>ligand shared with IscS</note>
    </ligand>
</feature>
<feature type="binding site" evidence="1 4">
    <location>
        <position position="63"/>
    </location>
    <ligand>
        <name>[2Fe-2S] cluster</name>
        <dbReference type="ChEBI" id="CHEBI:190135"/>
        <note>ligand shared with IscS</note>
    </ligand>
</feature>
<feature type="binding site" evidence="1 4">
    <location>
        <position position="106"/>
    </location>
    <ligand>
        <name>[2Fe-2S] cluster</name>
        <dbReference type="ChEBI" id="CHEBI:190135"/>
        <note>ligand shared with IscS</note>
    </ligand>
</feature>
<feature type="binding site" evidence="1 4">
    <location>
        <position position="107"/>
    </location>
    <ligand>
        <name>[2Fe-2S] cluster</name>
        <dbReference type="ChEBI" id="CHEBI:190135"/>
        <note>ligand shared with IscS</note>
    </ligand>
</feature>
<feature type="mutagenesis site" description="Stabilizes 2Fe-2S cluster binding, prolongs its half-life in air." evidence="3 4">
    <original>D</original>
    <variation>A</variation>
    <location>
        <position position="38"/>
    </location>
</feature>
<feature type="mutagenesis site" description="No effect on 2Fe-2S cluster." evidence="3">
    <location>
        <begin position="130"/>
        <end position="157"/>
    </location>
</feature>
<feature type="mutagenesis site" description="No effect on 2Fe-2S cluster." evidence="3">
    <location>
        <begin position="140"/>
        <end position="157"/>
    </location>
</feature>
<feature type="helix" evidence="6">
    <location>
        <begin position="4"/>
        <end position="14"/>
    </location>
</feature>
<feature type="strand" evidence="6">
    <location>
        <begin position="17"/>
        <end position="20"/>
    </location>
</feature>
<feature type="strand" evidence="6">
    <location>
        <begin position="26"/>
        <end position="33"/>
    </location>
</feature>
<feature type="turn" evidence="6">
    <location>
        <begin position="34"/>
        <end position="37"/>
    </location>
</feature>
<feature type="strand" evidence="6">
    <location>
        <begin position="38"/>
        <end position="46"/>
    </location>
</feature>
<feature type="turn" evidence="6">
    <location>
        <begin position="48"/>
        <end position="50"/>
    </location>
</feature>
<feature type="strand" evidence="6">
    <location>
        <begin position="52"/>
        <end position="62"/>
    </location>
</feature>
<feature type="helix" evidence="6">
    <location>
        <begin position="66"/>
        <end position="77"/>
    </location>
</feature>
<feature type="helix" evidence="6">
    <location>
        <begin position="82"/>
        <end position="87"/>
    </location>
</feature>
<feature type="helix" evidence="6">
    <location>
        <begin position="90"/>
        <end position="97"/>
    </location>
</feature>
<feature type="helix" evidence="6">
    <location>
        <begin position="111"/>
        <end position="124"/>
    </location>
</feature>
<feature type="turn" evidence="6">
    <location>
        <begin position="125"/>
        <end position="127"/>
    </location>
</feature>
<feature type="helix" evidence="6">
    <location>
        <begin position="129"/>
        <end position="134"/>
    </location>
</feature>
<dbReference type="EMBL" id="AE000657">
    <property type="protein sequence ID" value="AAC07015.1"/>
    <property type="molecule type" value="Genomic_DNA"/>
</dbReference>
<dbReference type="PIR" id="B70377">
    <property type="entry name" value="B70377"/>
</dbReference>
<dbReference type="RefSeq" id="NP_213607.1">
    <property type="nucleotide sequence ID" value="NC_000918.1"/>
</dbReference>
<dbReference type="RefSeq" id="WP_010880545.1">
    <property type="nucleotide sequence ID" value="NC_000918.1"/>
</dbReference>
<dbReference type="PDB" id="2Z7E">
    <property type="method" value="X-ray"/>
    <property type="resolution" value="2.30 A"/>
    <property type="chains" value="A/B/C=1-157"/>
</dbReference>
<dbReference type="PDBsum" id="2Z7E"/>
<dbReference type="SMR" id="O67045"/>
<dbReference type="FunCoup" id="O67045">
    <property type="interactions" value="385"/>
</dbReference>
<dbReference type="STRING" id="224324.aq_896"/>
<dbReference type="EnsemblBacteria" id="AAC07015">
    <property type="protein sequence ID" value="AAC07015"/>
    <property type="gene ID" value="aq_896"/>
</dbReference>
<dbReference type="KEGG" id="aae:aq_896"/>
<dbReference type="PATRIC" id="fig|224324.8.peg.697"/>
<dbReference type="eggNOG" id="COG0822">
    <property type="taxonomic scope" value="Bacteria"/>
</dbReference>
<dbReference type="HOGENOM" id="CLU_079283_5_1_0"/>
<dbReference type="InParanoid" id="O67045"/>
<dbReference type="OrthoDB" id="9804157at2"/>
<dbReference type="EvolutionaryTrace" id="O67045"/>
<dbReference type="Proteomes" id="UP000000798">
    <property type="component" value="Chromosome"/>
</dbReference>
<dbReference type="GO" id="GO:0005737">
    <property type="term" value="C:cytoplasm"/>
    <property type="evidence" value="ECO:0000318"/>
    <property type="project" value="GO_Central"/>
</dbReference>
<dbReference type="GO" id="GO:0051537">
    <property type="term" value="F:2 iron, 2 sulfur cluster binding"/>
    <property type="evidence" value="ECO:0000318"/>
    <property type="project" value="GO_Central"/>
</dbReference>
<dbReference type="GO" id="GO:0008198">
    <property type="term" value="F:ferrous iron binding"/>
    <property type="evidence" value="ECO:0000318"/>
    <property type="project" value="GO_Central"/>
</dbReference>
<dbReference type="GO" id="GO:0006879">
    <property type="term" value="P:intracellular iron ion homeostasis"/>
    <property type="evidence" value="ECO:0000318"/>
    <property type="project" value="GO_Central"/>
</dbReference>
<dbReference type="GO" id="GO:0016226">
    <property type="term" value="P:iron-sulfur cluster assembly"/>
    <property type="evidence" value="ECO:0007669"/>
    <property type="project" value="InterPro"/>
</dbReference>
<dbReference type="CDD" id="cd06664">
    <property type="entry name" value="IscU_like"/>
    <property type="match status" value="1"/>
</dbReference>
<dbReference type="FunFam" id="3.90.1010.10:FF:000009">
    <property type="entry name" value="FeS cluster assembly scaffold protein NifU"/>
    <property type="match status" value="1"/>
</dbReference>
<dbReference type="Gene3D" id="3.90.1010.10">
    <property type="match status" value="1"/>
</dbReference>
<dbReference type="InterPro" id="IPR002871">
    <property type="entry name" value="NIF_FeS_clus_asmbl_NifU_N"/>
</dbReference>
<dbReference type="PANTHER" id="PTHR10093">
    <property type="entry name" value="IRON-SULFUR CLUSTER ASSEMBLY ENZYME NIFU HOMOLOG"/>
    <property type="match status" value="1"/>
</dbReference>
<dbReference type="Pfam" id="PF01592">
    <property type="entry name" value="NifU_N"/>
    <property type="match status" value="1"/>
</dbReference>
<dbReference type="SUPFAM" id="SSF82649">
    <property type="entry name" value="SufE/NifU"/>
    <property type="match status" value="1"/>
</dbReference>
<keyword id="KW-0001">2Fe-2S</keyword>
<keyword id="KW-0002">3D-structure</keyword>
<keyword id="KW-0408">Iron</keyword>
<keyword id="KW-0411">Iron-sulfur</keyword>
<keyword id="KW-0479">Metal-binding</keyword>
<keyword id="KW-1185">Reference proteome</keyword>
<protein>
    <recommendedName>
        <fullName>Iron-sulfur cluster assembly scaffold protein IscU</fullName>
    </recommendedName>
    <alternativeName>
        <fullName>Sulfur acceptor protein IscU</fullName>
    </alternativeName>
</protein>